<gene>
    <name evidence="1" type="primary">fadA</name>
    <name type="ordered locus">Sputcn32_0012</name>
</gene>
<evidence type="ECO:0000255" key="1">
    <source>
        <dbReference type="HAMAP-Rule" id="MF_01620"/>
    </source>
</evidence>
<proteinExistence type="inferred from homology"/>
<reference key="1">
    <citation type="submission" date="2007-04" db="EMBL/GenBank/DDBJ databases">
        <title>Complete sequence of Shewanella putrefaciens CN-32.</title>
        <authorList>
            <consortium name="US DOE Joint Genome Institute"/>
            <person name="Copeland A."/>
            <person name="Lucas S."/>
            <person name="Lapidus A."/>
            <person name="Barry K."/>
            <person name="Detter J.C."/>
            <person name="Glavina del Rio T."/>
            <person name="Hammon N."/>
            <person name="Israni S."/>
            <person name="Dalin E."/>
            <person name="Tice H."/>
            <person name="Pitluck S."/>
            <person name="Chain P."/>
            <person name="Malfatti S."/>
            <person name="Shin M."/>
            <person name="Vergez L."/>
            <person name="Schmutz J."/>
            <person name="Larimer F."/>
            <person name="Land M."/>
            <person name="Hauser L."/>
            <person name="Kyrpides N."/>
            <person name="Mikhailova N."/>
            <person name="Romine M.F."/>
            <person name="Fredrickson J."/>
            <person name="Tiedje J."/>
            <person name="Richardson P."/>
        </authorList>
    </citation>
    <scope>NUCLEOTIDE SEQUENCE [LARGE SCALE GENOMIC DNA]</scope>
    <source>
        <strain>CN-32 / ATCC BAA-453</strain>
    </source>
</reference>
<protein>
    <recommendedName>
        <fullName evidence="1">3-ketoacyl-CoA thiolase</fullName>
        <ecNumber evidence="1">2.3.1.16</ecNumber>
    </recommendedName>
    <alternativeName>
        <fullName evidence="1">Acetyl-CoA acyltransferase</fullName>
    </alternativeName>
    <alternativeName>
        <fullName evidence="1">Beta-ketothiolase</fullName>
    </alternativeName>
    <alternativeName>
        <fullName evidence="1">Fatty acid oxidation complex subunit beta</fullName>
    </alternativeName>
</protein>
<sequence length="387" mass="40576">MKQAVIVDCIRTPMGRSKAGVFRNVRAETLSAELMKGLLLRNPQLDPNLIEDVIWGCVQQTLEQGFNIARNASLLAGIPKTAGAVTVNRLCGSSMDAIHQAARAIMTGMGDTFIIGGVEHMGHVPMSHGVDFHPGLANNVAKASGMMGLTAEMLGKLHGITREQQDAFAVRSHQRAYAATVEGRFAKEIYGIEGHDANGALIKVLQDEVIRPETTMESLAALRPVFDPVNGTVTAGTSSALSDGASAMLIMEESKARALGLPIRARIRSMAVAGCDAAIMGYGPVPATQKALARAGITVADLDVIELNEAFAAQSLPCVKDLGLADVVDDKINLNGGAIALGHPLGCSGARISTTLINLMEDKDATLGLATMCIGLGQGIATVFERV</sequence>
<organism>
    <name type="scientific">Shewanella putrefaciens (strain CN-32 / ATCC BAA-453)</name>
    <dbReference type="NCBI Taxonomy" id="319224"/>
    <lineage>
        <taxon>Bacteria</taxon>
        <taxon>Pseudomonadati</taxon>
        <taxon>Pseudomonadota</taxon>
        <taxon>Gammaproteobacteria</taxon>
        <taxon>Alteromonadales</taxon>
        <taxon>Shewanellaceae</taxon>
        <taxon>Shewanella</taxon>
    </lineage>
</organism>
<dbReference type="EC" id="2.3.1.16" evidence="1"/>
<dbReference type="EMBL" id="CP000681">
    <property type="protein sequence ID" value="ABP73748.1"/>
    <property type="molecule type" value="Genomic_DNA"/>
</dbReference>
<dbReference type="SMR" id="A4Y1B5"/>
<dbReference type="STRING" id="319224.Sputcn32_0012"/>
<dbReference type="KEGG" id="spc:Sputcn32_0012"/>
<dbReference type="eggNOG" id="COG0183">
    <property type="taxonomic scope" value="Bacteria"/>
</dbReference>
<dbReference type="HOGENOM" id="CLU_031026_2_3_6"/>
<dbReference type="UniPathway" id="UPA00659"/>
<dbReference type="GO" id="GO:0005737">
    <property type="term" value="C:cytoplasm"/>
    <property type="evidence" value="ECO:0007669"/>
    <property type="project" value="UniProtKB-SubCell"/>
</dbReference>
<dbReference type="GO" id="GO:0003988">
    <property type="term" value="F:acetyl-CoA C-acyltransferase activity"/>
    <property type="evidence" value="ECO:0007669"/>
    <property type="project" value="UniProtKB-UniRule"/>
</dbReference>
<dbReference type="GO" id="GO:0006635">
    <property type="term" value="P:fatty acid beta-oxidation"/>
    <property type="evidence" value="ECO:0007669"/>
    <property type="project" value="UniProtKB-UniRule"/>
</dbReference>
<dbReference type="GO" id="GO:0010124">
    <property type="term" value="P:phenylacetate catabolic process"/>
    <property type="evidence" value="ECO:0007669"/>
    <property type="project" value="TreeGrafter"/>
</dbReference>
<dbReference type="CDD" id="cd00751">
    <property type="entry name" value="thiolase"/>
    <property type="match status" value="1"/>
</dbReference>
<dbReference type="FunFam" id="3.40.47.10:FF:000010">
    <property type="entry name" value="Acetyl-CoA acetyltransferase (Thiolase)"/>
    <property type="match status" value="1"/>
</dbReference>
<dbReference type="Gene3D" id="3.40.47.10">
    <property type="match status" value="2"/>
</dbReference>
<dbReference type="HAMAP" id="MF_01620">
    <property type="entry name" value="FadA"/>
    <property type="match status" value="1"/>
</dbReference>
<dbReference type="InterPro" id="IPR012805">
    <property type="entry name" value="FadA"/>
</dbReference>
<dbReference type="InterPro" id="IPR002155">
    <property type="entry name" value="Thiolase"/>
</dbReference>
<dbReference type="InterPro" id="IPR016039">
    <property type="entry name" value="Thiolase-like"/>
</dbReference>
<dbReference type="InterPro" id="IPR050215">
    <property type="entry name" value="Thiolase-like_sf_Thiolase"/>
</dbReference>
<dbReference type="InterPro" id="IPR020615">
    <property type="entry name" value="Thiolase_acyl_enz_int_AS"/>
</dbReference>
<dbReference type="InterPro" id="IPR020610">
    <property type="entry name" value="Thiolase_AS"/>
</dbReference>
<dbReference type="InterPro" id="IPR020617">
    <property type="entry name" value="Thiolase_C"/>
</dbReference>
<dbReference type="InterPro" id="IPR020613">
    <property type="entry name" value="Thiolase_CS"/>
</dbReference>
<dbReference type="InterPro" id="IPR020616">
    <property type="entry name" value="Thiolase_N"/>
</dbReference>
<dbReference type="NCBIfam" id="TIGR01930">
    <property type="entry name" value="AcCoA-C-Actrans"/>
    <property type="match status" value="1"/>
</dbReference>
<dbReference type="NCBIfam" id="TIGR02445">
    <property type="entry name" value="fadA"/>
    <property type="match status" value="1"/>
</dbReference>
<dbReference type="NCBIfam" id="NF006510">
    <property type="entry name" value="PRK08947.1"/>
    <property type="match status" value="1"/>
</dbReference>
<dbReference type="PANTHER" id="PTHR43853:SF11">
    <property type="entry name" value="3-KETOACYL-COA THIOLASE FADA"/>
    <property type="match status" value="1"/>
</dbReference>
<dbReference type="PANTHER" id="PTHR43853">
    <property type="entry name" value="3-KETOACYL-COA THIOLASE, PEROXISOMAL"/>
    <property type="match status" value="1"/>
</dbReference>
<dbReference type="Pfam" id="PF02803">
    <property type="entry name" value="Thiolase_C"/>
    <property type="match status" value="1"/>
</dbReference>
<dbReference type="Pfam" id="PF00108">
    <property type="entry name" value="Thiolase_N"/>
    <property type="match status" value="1"/>
</dbReference>
<dbReference type="PIRSF" id="PIRSF000429">
    <property type="entry name" value="Ac-CoA_Ac_transf"/>
    <property type="match status" value="1"/>
</dbReference>
<dbReference type="SUPFAM" id="SSF53901">
    <property type="entry name" value="Thiolase-like"/>
    <property type="match status" value="2"/>
</dbReference>
<dbReference type="PROSITE" id="PS00098">
    <property type="entry name" value="THIOLASE_1"/>
    <property type="match status" value="1"/>
</dbReference>
<dbReference type="PROSITE" id="PS00737">
    <property type="entry name" value="THIOLASE_2"/>
    <property type="match status" value="1"/>
</dbReference>
<dbReference type="PROSITE" id="PS00099">
    <property type="entry name" value="THIOLASE_3"/>
    <property type="match status" value="1"/>
</dbReference>
<feature type="chain" id="PRO_0000323555" description="3-ketoacyl-CoA thiolase">
    <location>
        <begin position="1"/>
        <end position="387"/>
    </location>
</feature>
<feature type="active site" description="Acyl-thioester intermediate" evidence="1">
    <location>
        <position position="91"/>
    </location>
</feature>
<feature type="active site" description="Proton acceptor" evidence="1">
    <location>
        <position position="343"/>
    </location>
</feature>
<feature type="active site" description="Proton acceptor" evidence="1">
    <location>
        <position position="373"/>
    </location>
</feature>
<accession>A4Y1B5</accession>
<comment type="function">
    <text evidence="1">Catalyzes the final step of fatty acid oxidation in which acetyl-CoA is released and the CoA ester of a fatty acid two carbons shorter is formed.</text>
</comment>
<comment type="catalytic activity">
    <reaction evidence="1">
        <text>an acyl-CoA + acetyl-CoA = a 3-oxoacyl-CoA + CoA</text>
        <dbReference type="Rhea" id="RHEA:21564"/>
        <dbReference type="ChEBI" id="CHEBI:57287"/>
        <dbReference type="ChEBI" id="CHEBI:57288"/>
        <dbReference type="ChEBI" id="CHEBI:58342"/>
        <dbReference type="ChEBI" id="CHEBI:90726"/>
        <dbReference type="EC" id="2.3.1.16"/>
    </reaction>
</comment>
<comment type="pathway">
    <text evidence="1">Lipid metabolism; fatty acid beta-oxidation.</text>
</comment>
<comment type="subunit">
    <text evidence="1">Heterotetramer of two alpha chains (FadB) and two beta chains (FadA).</text>
</comment>
<comment type="subcellular location">
    <subcellularLocation>
        <location evidence="1">Cytoplasm</location>
    </subcellularLocation>
</comment>
<comment type="similarity">
    <text evidence="1">Belongs to the thiolase-like superfamily. Thiolase family.</text>
</comment>
<name>FADA_SHEPC</name>
<keyword id="KW-0012">Acyltransferase</keyword>
<keyword id="KW-0963">Cytoplasm</keyword>
<keyword id="KW-0276">Fatty acid metabolism</keyword>
<keyword id="KW-0442">Lipid degradation</keyword>
<keyword id="KW-0443">Lipid metabolism</keyword>
<keyword id="KW-0808">Transferase</keyword>